<feature type="chain" id="PRO_0000108528" description="Transcriptional regulator MraZ">
    <location>
        <begin position="1"/>
        <end position="149"/>
    </location>
</feature>
<feature type="domain" description="SpoVT-AbrB 1" evidence="2">
    <location>
        <begin position="7"/>
        <end position="54"/>
    </location>
</feature>
<feature type="domain" description="SpoVT-AbrB 2" evidence="2">
    <location>
        <begin position="83"/>
        <end position="126"/>
    </location>
</feature>
<organism>
    <name type="scientific">Rickettsia typhi (strain ATCC VR-144 / Wilmington)</name>
    <dbReference type="NCBI Taxonomy" id="257363"/>
    <lineage>
        <taxon>Bacteria</taxon>
        <taxon>Pseudomonadati</taxon>
        <taxon>Pseudomonadota</taxon>
        <taxon>Alphaproteobacteria</taxon>
        <taxon>Rickettsiales</taxon>
        <taxon>Rickettsiaceae</taxon>
        <taxon>Rickettsieae</taxon>
        <taxon>Rickettsia</taxon>
        <taxon>typhus group</taxon>
    </lineage>
</organism>
<evidence type="ECO:0000255" key="1">
    <source>
        <dbReference type="HAMAP-Rule" id="MF_01008"/>
    </source>
</evidence>
<evidence type="ECO:0000255" key="2">
    <source>
        <dbReference type="PROSITE-ProRule" id="PRU01076"/>
    </source>
</evidence>
<name>MRAZ_RICTY</name>
<reference key="1">
    <citation type="journal article" date="2004" name="J. Bacteriol.">
        <title>Complete genome sequence of Rickettsia typhi and comparison with sequences of other Rickettsiae.</title>
        <authorList>
            <person name="McLeod M.P."/>
            <person name="Qin X."/>
            <person name="Karpathy S.E."/>
            <person name="Gioia J."/>
            <person name="Highlander S.K."/>
            <person name="Fox G.E."/>
            <person name="McNeill T.Z."/>
            <person name="Jiang H."/>
            <person name="Muzny D."/>
            <person name="Jacob L.S."/>
            <person name="Hawes A.C."/>
            <person name="Sodergren E."/>
            <person name="Gill R."/>
            <person name="Hume J."/>
            <person name="Morgan M."/>
            <person name="Fan G."/>
            <person name="Amin A.G."/>
            <person name="Gibbs R.A."/>
            <person name="Hong C."/>
            <person name="Yu X.-J."/>
            <person name="Walker D.H."/>
            <person name="Weinstock G.M."/>
        </authorList>
    </citation>
    <scope>NUCLEOTIDE SEQUENCE [LARGE SCALE GENOMIC DNA]</scope>
    <source>
        <strain>ATCC VR-144 / Wilmington</strain>
    </source>
</reference>
<accession>Q68WG6</accession>
<proteinExistence type="inferred from homology"/>
<dbReference type="EMBL" id="AE017197">
    <property type="protein sequence ID" value="AAU04026.1"/>
    <property type="molecule type" value="Genomic_DNA"/>
</dbReference>
<dbReference type="RefSeq" id="WP_011191007.1">
    <property type="nucleotide sequence ID" value="NC_006142.1"/>
</dbReference>
<dbReference type="SMR" id="Q68WG6"/>
<dbReference type="KEGG" id="rty:RT0558"/>
<dbReference type="eggNOG" id="COG2001">
    <property type="taxonomic scope" value="Bacteria"/>
</dbReference>
<dbReference type="HOGENOM" id="CLU_107907_1_0_5"/>
<dbReference type="OrthoDB" id="9807753at2"/>
<dbReference type="Proteomes" id="UP000000604">
    <property type="component" value="Chromosome"/>
</dbReference>
<dbReference type="GO" id="GO:0005737">
    <property type="term" value="C:cytoplasm"/>
    <property type="evidence" value="ECO:0007669"/>
    <property type="project" value="UniProtKB-UniRule"/>
</dbReference>
<dbReference type="GO" id="GO:0009295">
    <property type="term" value="C:nucleoid"/>
    <property type="evidence" value="ECO:0007669"/>
    <property type="project" value="UniProtKB-SubCell"/>
</dbReference>
<dbReference type="GO" id="GO:0003700">
    <property type="term" value="F:DNA-binding transcription factor activity"/>
    <property type="evidence" value="ECO:0007669"/>
    <property type="project" value="UniProtKB-UniRule"/>
</dbReference>
<dbReference type="GO" id="GO:0000976">
    <property type="term" value="F:transcription cis-regulatory region binding"/>
    <property type="evidence" value="ECO:0007669"/>
    <property type="project" value="TreeGrafter"/>
</dbReference>
<dbReference type="GO" id="GO:2000143">
    <property type="term" value="P:negative regulation of DNA-templated transcription initiation"/>
    <property type="evidence" value="ECO:0007669"/>
    <property type="project" value="TreeGrafter"/>
</dbReference>
<dbReference type="CDD" id="cd16321">
    <property type="entry name" value="MraZ_C"/>
    <property type="match status" value="1"/>
</dbReference>
<dbReference type="CDD" id="cd16320">
    <property type="entry name" value="MraZ_N"/>
    <property type="match status" value="1"/>
</dbReference>
<dbReference type="Gene3D" id="3.40.1550.20">
    <property type="entry name" value="Transcriptional regulator MraZ domain"/>
    <property type="match status" value="1"/>
</dbReference>
<dbReference type="HAMAP" id="MF_01008">
    <property type="entry name" value="MraZ"/>
    <property type="match status" value="1"/>
</dbReference>
<dbReference type="InterPro" id="IPR003444">
    <property type="entry name" value="MraZ"/>
</dbReference>
<dbReference type="InterPro" id="IPR035644">
    <property type="entry name" value="MraZ_C"/>
</dbReference>
<dbReference type="InterPro" id="IPR020603">
    <property type="entry name" value="MraZ_dom"/>
</dbReference>
<dbReference type="InterPro" id="IPR035642">
    <property type="entry name" value="MraZ_N"/>
</dbReference>
<dbReference type="InterPro" id="IPR038619">
    <property type="entry name" value="MraZ_sf"/>
</dbReference>
<dbReference type="InterPro" id="IPR007159">
    <property type="entry name" value="SpoVT-AbrB_dom"/>
</dbReference>
<dbReference type="InterPro" id="IPR037914">
    <property type="entry name" value="SpoVT-AbrB_sf"/>
</dbReference>
<dbReference type="NCBIfam" id="NF001475">
    <property type="entry name" value="PRK00326.2-1"/>
    <property type="match status" value="1"/>
</dbReference>
<dbReference type="PANTHER" id="PTHR34701">
    <property type="entry name" value="TRANSCRIPTIONAL REGULATOR MRAZ"/>
    <property type="match status" value="1"/>
</dbReference>
<dbReference type="PANTHER" id="PTHR34701:SF1">
    <property type="entry name" value="TRANSCRIPTIONAL REGULATOR MRAZ"/>
    <property type="match status" value="1"/>
</dbReference>
<dbReference type="Pfam" id="PF02381">
    <property type="entry name" value="MraZ"/>
    <property type="match status" value="1"/>
</dbReference>
<dbReference type="SUPFAM" id="SSF89447">
    <property type="entry name" value="AbrB/MazE/MraZ-like"/>
    <property type="match status" value="1"/>
</dbReference>
<dbReference type="PROSITE" id="PS51740">
    <property type="entry name" value="SPOVT_ABRB"/>
    <property type="match status" value="2"/>
</dbReference>
<keyword id="KW-0963">Cytoplasm</keyword>
<keyword id="KW-0238">DNA-binding</keyword>
<keyword id="KW-0677">Repeat</keyword>
<keyword id="KW-0804">Transcription</keyword>
<keyword id="KW-0805">Transcription regulation</keyword>
<protein>
    <recommendedName>
        <fullName>Transcriptional regulator MraZ</fullName>
    </recommendedName>
</protein>
<comment type="subunit">
    <text evidence="1">Forms oligomers.</text>
</comment>
<comment type="subcellular location">
    <subcellularLocation>
        <location evidence="1">Cytoplasm</location>
        <location evidence="1">Nucleoid</location>
    </subcellularLocation>
</comment>
<comment type="similarity">
    <text evidence="1">Belongs to the MraZ family.</text>
</comment>
<gene>
    <name evidence="1" type="primary">mraZ</name>
    <name type="ordered locus">RT0558</name>
</gene>
<sequence>MNVFLSKYINGVDKKSRVTVPANYRAVLGKELFNGVIAYPSIRNNCIEVCGIAHIEKLRKMIETLDPYSEERDAFETMIFGEAVQLAFDGEGRIILPQSLMKHADIEEQACFVGKGIIFEIWQPQNFEKYLSYAQNIAHEKRLTLRNVH</sequence>